<dbReference type="EMBL" id="AM040265">
    <property type="protein sequence ID" value="CAJ13028.1"/>
    <property type="molecule type" value="Genomic_DNA"/>
</dbReference>
<dbReference type="RefSeq" id="WP_002966248.1">
    <property type="nucleotide sequence ID" value="NZ_KN046823.1"/>
</dbReference>
<dbReference type="SMR" id="Q2YK18"/>
<dbReference type="STRING" id="359391.BAB2_0862"/>
<dbReference type="GeneID" id="93015292"/>
<dbReference type="KEGG" id="bmf:BAB2_0862"/>
<dbReference type="PATRIC" id="fig|359391.11.peg.550"/>
<dbReference type="HOGENOM" id="CLU_170142_0_0_5"/>
<dbReference type="PhylomeDB" id="Q2YK18"/>
<dbReference type="PRO" id="PR:Q2YK18"/>
<dbReference type="Proteomes" id="UP000002719">
    <property type="component" value="Chromosome II"/>
</dbReference>
<dbReference type="GO" id="GO:0030288">
    <property type="term" value="C:outer membrane-bounded periplasmic space"/>
    <property type="evidence" value="ECO:0007669"/>
    <property type="project" value="InterPro"/>
</dbReference>
<dbReference type="GO" id="GO:1990451">
    <property type="term" value="P:cellular stress response to acidic pH"/>
    <property type="evidence" value="ECO:0007669"/>
    <property type="project" value="UniProtKB-UniRule"/>
</dbReference>
<dbReference type="Gene3D" id="1.10.890.10">
    <property type="entry name" value="HNS-dependent expression A"/>
    <property type="match status" value="1"/>
</dbReference>
<dbReference type="HAMAP" id="MF_00946">
    <property type="entry name" value="HdeA"/>
    <property type="match status" value="1"/>
</dbReference>
<dbReference type="InterPro" id="IPR024972">
    <property type="entry name" value="HdeA"/>
</dbReference>
<dbReference type="InterPro" id="IPR038303">
    <property type="entry name" value="HdeA/HdeB_sf"/>
</dbReference>
<dbReference type="InterPro" id="IPR036831">
    <property type="entry name" value="HdeA_sf"/>
</dbReference>
<dbReference type="InterPro" id="IPR010486">
    <property type="entry name" value="HNS-dep_expression_A/B"/>
</dbReference>
<dbReference type="NCBIfam" id="NF007576">
    <property type="entry name" value="PRK10208.1"/>
    <property type="match status" value="1"/>
</dbReference>
<dbReference type="Pfam" id="PF06411">
    <property type="entry name" value="HdeA"/>
    <property type="match status" value="1"/>
</dbReference>
<dbReference type="PIRSF" id="PIRSF009564">
    <property type="entry name" value="HNS-dep_expression_A"/>
    <property type="match status" value="1"/>
</dbReference>
<dbReference type="SUPFAM" id="SSF47752">
    <property type="entry name" value="Protein HNS-dependent expression A, HdeA"/>
    <property type="match status" value="1"/>
</dbReference>
<keyword id="KW-0143">Chaperone</keyword>
<keyword id="KW-0903">Direct protein sequencing</keyword>
<keyword id="KW-1015">Disulfide bond</keyword>
<keyword id="KW-0574">Periplasm</keyword>
<keyword id="KW-1185">Reference proteome</keyword>
<keyword id="KW-0732">Signal</keyword>
<protein>
    <recommendedName>
        <fullName evidence="1">Probable acid stress chaperone HdeA</fullName>
    </recommendedName>
</protein>
<reference key="1">
    <citation type="journal article" date="2005" name="Infect. Immun.">
        <title>Whole-genome analyses of speciation events in pathogenic Brucellae.</title>
        <authorList>
            <person name="Chain P.S."/>
            <person name="Comerci D.J."/>
            <person name="Tolmasky M.E."/>
            <person name="Larimer F.W."/>
            <person name="Malfatti S.A."/>
            <person name="Vergez L.M."/>
            <person name="Aguero F."/>
            <person name="Land M.L."/>
            <person name="Ugalde R.A."/>
            <person name="Garcia E."/>
        </authorList>
    </citation>
    <scope>NUCLEOTIDE SEQUENCE [LARGE SCALE GENOMIC DNA]</scope>
    <source>
        <strain>2308</strain>
    </source>
</reference>
<reference key="2">
    <citation type="journal article" date="2005" name="Vet. Microbiol.">
        <title>Role of HdeA in acid resistance and virulence in Brucella abortus 2308.</title>
        <authorList>
            <person name="Valderas M.W."/>
            <person name="Alcantara R.B."/>
            <person name="Baumgartner J.E."/>
            <person name="Bellaire B.H."/>
            <person name="Robertson G.T."/>
            <person name="Ng W.-L."/>
            <person name="Richardson J.M."/>
            <person name="Winkler M.E."/>
            <person name="Roop R.M. II"/>
        </authorList>
    </citation>
    <scope>PROTEIN SEQUENCE OF 27-41</scope>
    <scope>FUNCTION IN ACID RESISTANCE AND VIRULENCE</scope>
</reference>
<name>HDEA_BRUA2</name>
<accession>Q2YK18</accession>
<proteinExistence type="evidence at protein level"/>
<comment type="function">
    <text evidence="1 2">Required for optimal acid stress protection. Exhibits a chaperone-like activity only at low pH by suppressing non-specifically the aggregation of denaturated periplasmic proteins (By similarity). Contributes to acid resistance. Not required for wild-type virulence in the BALB/c mouse model.</text>
</comment>
<comment type="subcellular location">
    <subcellularLocation>
        <location evidence="1">Periplasm</location>
    </subcellularLocation>
</comment>
<comment type="similarity">
    <text evidence="1">Belongs to the HdeA family.</text>
</comment>
<gene>
    <name evidence="1" type="primary">hdeA</name>
    <name type="ordered locus">BAB2_0862</name>
</gene>
<organism>
    <name type="scientific">Brucella abortus (strain 2308)</name>
    <dbReference type="NCBI Taxonomy" id="359391"/>
    <lineage>
        <taxon>Bacteria</taxon>
        <taxon>Pseudomonadati</taxon>
        <taxon>Pseudomonadota</taxon>
        <taxon>Alphaproteobacteria</taxon>
        <taxon>Hyphomicrobiales</taxon>
        <taxon>Brucellaceae</taxon>
        <taxon>Brucella/Ochrobactrum group</taxon>
        <taxon>Brucella</taxon>
    </lineage>
</organism>
<sequence>MIKALFNKNTALAAVAILALSGGAMAESAKTHKTDMAKKKVSELTCEDFNGLEESFKPTVVGWVVGFNKKGKEEDAVIDVDGIETVTPAIIEACKQEPKASFWKKAEAELKKVF</sequence>
<feature type="signal peptide" evidence="1 2">
    <location>
        <begin position="1"/>
        <end position="26"/>
    </location>
</feature>
<feature type="chain" id="PRO_0000338631" description="Probable acid stress chaperone HdeA">
    <location>
        <begin position="27"/>
        <end position="114"/>
    </location>
</feature>
<feature type="disulfide bond" evidence="1">
    <location>
        <begin position="46"/>
        <end position="94"/>
    </location>
</feature>
<evidence type="ECO:0000255" key="1">
    <source>
        <dbReference type="HAMAP-Rule" id="MF_00946"/>
    </source>
</evidence>
<evidence type="ECO:0000269" key="2">
    <source>
    </source>
</evidence>